<sequence length="484" mass="50665">MTKEQQLAERIIAAVGGMDNIDSVMNCMTRVRIKVLDENKVDDQELRHIDGVMGVIHDERIQVVVGPGTVNKVANHMAELSGVKLGDPIPHHHNDSEKMDYKSYAADKAKANKEAHKAKQKNGKLNKVLKSIANIFIPLIPAFIGAGLIGGIAAVLSNLMVAGYISGAWITQLITVFNVIKDGMLAYLAIFTGINAAKEFGATPGLGGVIGGTTLLTGIAGKNILMNVFTGEPLQPGQGGIIGVIFAVWILSIVEKRLHKIVPNAIDIIVTPTIALLIVGLLTIFIFMPLAGFVSDSLVSVVNGIISIGGVFSGFIIGASFLPLVMLGLHHIFTPIHIEMINQSGATYLLPIAAMAGAGQVGAALALWVRCKRNTTLRNTLKGALPVGFLGIGEPLIYGVTLPLGRPFLTACIGGGIGGAVIGGIGHIGAKAIGPSGVSLLPLISDNMYLGYIAGLLAAYAGGFVCTYLFGTTKAMRQTDLLGD</sequence>
<dbReference type="EC" id="2.7.1.-" evidence="1"/>
<dbReference type="EMBL" id="BA000018">
    <property type="protein sequence ID" value="BAB41407.1"/>
    <property type="molecule type" value="Genomic_DNA"/>
</dbReference>
<dbReference type="PIR" id="D89781">
    <property type="entry name" value="D89781"/>
</dbReference>
<dbReference type="RefSeq" id="WP_000159750.1">
    <property type="nucleotide sequence ID" value="NC_002745.2"/>
</dbReference>
<dbReference type="SMR" id="Q7A804"/>
<dbReference type="EnsemblBacteria" id="BAB41407">
    <property type="protein sequence ID" value="BAB41407"/>
    <property type="gene ID" value="BAB41407"/>
</dbReference>
<dbReference type="KEGG" id="sau:SA0186"/>
<dbReference type="HOGENOM" id="CLU_012312_2_0_9"/>
<dbReference type="UniPathway" id="UPA00544"/>
<dbReference type="GO" id="GO:0005886">
    <property type="term" value="C:plasma membrane"/>
    <property type="evidence" value="ECO:0007669"/>
    <property type="project" value="UniProtKB-SubCell"/>
</dbReference>
<dbReference type="GO" id="GO:0016301">
    <property type="term" value="F:kinase activity"/>
    <property type="evidence" value="ECO:0007669"/>
    <property type="project" value="UniProtKB-KW"/>
</dbReference>
<dbReference type="GO" id="GO:0008982">
    <property type="term" value="F:protein-N(PI)-phosphohistidine-sugar phosphotransferase activity"/>
    <property type="evidence" value="ECO:0007669"/>
    <property type="project" value="InterPro"/>
</dbReference>
<dbReference type="GO" id="GO:0090588">
    <property type="term" value="F:protein-phosphocysteine-N-acetylmuramate phosphotransferase system transporter activity"/>
    <property type="evidence" value="ECO:0007669"/>
    <property type="project" value="TreeGrafter"/>
</dbReference>
<dbReference type="GO" id="GO:0009254">
    <property type="term" value="P:peptidoglycan turnover"/>
    <property type="evidence" value="ECO:0007669"/>
    <property type="project" value="UniProtKB-UniPathway"/>
</dbReference>
<dbReference type="GO" id="GO:0009401">
    <property type="term" value="P:phosphoenolpyruvate-dependent sugar phosphotransferase system"/>
    <property type="evidence" value="ECO:0007669"/>
    <property type="project" value="UniProtKB-KW"/>
</dbReference>
<dbReference type="CDD" id="cd00212">
    <property type="entry name" value="PTS_IIB_glc"/>
    <property type="match status" value="1"/>
</dbReference>
<dbReference type="FunFam" id="3.30.1360.60:FF:000001">
    <property type="entry name" value="PTS system glucose-specific IIBC component PtsG"/>
    <property type="match status" value="1"/>
</dbReference>
<dbReference type="Gene3D" id="3.30.1360.60">
    <property type="entry name" value="Glucose permease domain IIB"/>
    <property type="match status" value="1"/>
</dbReference>
<dbReference type="InterPro" id="IPR036878">
    <property type="entry name" value="Glu_permease_IIB"/>
</dbReference>
<dbReference type="InterPro" id="IPR018113">
    <property type="entry name" value="PTrfase_EIIB_Cys"/>
</dbReference>
<dbReference type="InterPro" id="IPR003352">
    <property type="entry name" value="PTS_EIIC"/>
</dbReference>
<dbReference type="InterPro" id="IPR013013">
    <property type="entry name" value="PTS_EIIC_1"/>
</dbReference>
<dbReference type="InterPro" id="IPR001996">
    <property type="entry name" value="PTS_IIB_1"/>
</dbReference>
<dbReference type="InterPro" id="IPR050558">
    <property type="entry name" value="PTS_Sugar-Specific_Components"/>
</dbReference>
<dbReference type="PANTHER" id="PTHR30175">
    <property type="entry name" value="PHOSPHOTRANSFERASE SYSTEM TRANSPORT PROTEIN"/>
    <property type="match status" value="1"/>
</dbReference>
<dbReference type="PANTHER" id="PTHR30175:SF3">
    <property type="entry name" value="PTS SYSTEM N-ACETYLMURAMIC ACID-SPECIFIC EIIBC COMPONENT"/>
    <property type="match status" value="1"/>
</dbReference>
<dbReference type="Pfam" id="PF00367">
    <property type="entry name" value="PTS_EIIB"/>
    <property type="match status" value="1"/>
</dbReference>
<dbReference type="Pfam" id="PF02378">
    <property type="entry name" value="PTS_EIIC"/>
    <property type="match status" value="1"/>
</dbReference>
<dbReference type="SUPFAM" id="SSF55604">
    <property type="entry name" value="Glucose permease domain IIB"/>
    <property type="match status" value="1"/>
</dbReference>
<dbReference type="PROSITE" id="PS51098">
    <property type="entry name" value="PTS_EIIB_TYPE_1"/>
    <property type="match status" value="1"/>
</dbReference>
<dbReference type="PROSITE" id="PS01035">
    <property type="entry name" value="PTS_EIIB_TYPE_1_CYS"/>
    <property type="match status" value="1"/>
</dbReference>
<dbReference type="PROSITE" id="PS51103">
    <property type="entry name" value="PTS_EIIC_TYPE_1"/>
    <property type="match status" value="1"/>
</dbReference>
<organism>
    <name type="scientific">Staphylococcus aureus (strain N315)</name>
    <dbReference type="NCBI Taxonomy" id="158879"/>
    <lineage>
        <taxon>Bacteria</taxon>
        <taxon>Bacillati</taxon>
        <taxon>Bacillota</taxon>
        <taxon>Bacilli</taxon>
        <taxon>Bacillales</taxon>
        <taxon>Staphylococcaceae</taxon>
        <taxon>Staphylococcus</taxon>
    </lineage>
</organism>
<feature type="chain" id="PRO_0000272177" description="PTS system MurNAc-GlcNAc-specific EIIBC component">
    <location>
        <begin position="1"/>
        <end position="484"/>
    </location>
</feature>
<feature type="transmembrane region" description="Helical" evidence="3">
    <location>
        <begin position="135"/>
        <end position="155"/>
    </location>
</feature>
<feature type="transmembrane region" description="Helical" evidence="3">
    <location>
        <begin position="160"/>
        <end position="180"/>
    </location>
</feature>
<feature type="transmembrane region" description="Helical" evidence="3">
    <location>
        <begin position="200"/>
        <end position="220"/>
    </location>
</feature>
<feature type="transmembrane region" description="Helical" evidence="3">
    <location>
        <begin position="234"/>
        <end position="254"/>
    </location>
</feature>
<feature type="transmembrane region" description="Helical" evidence="3">
    <location>
        <begin position="274"/>
        <end position="294"/>
    </location>
</feature>
<feature type="transmembrane region" description="Helical" evidence="3">
    <location>
        <begin position="305"/>
        <end position="325"/>
    </location>
</feature>
<feature type="transmembrane region" description="Helical" evidence="3">
    <location>
        <begin position="349"/>
        <end position="369"/>
    </location>
</feature>
<feature type="transmembrane region" description="Helical" evidence="3">
    <location>
        <begin position="384"/>
        <end position="404"/>
    </location>
</feature>
<feature type="transmembrane region" description="Helical" evidence="3">
    <location>
        <begin position="408"/>
        <end position="428"/>
    </location>
</feature>
<feature type="transmembrane region" description="Helical" evidence="3">
    <location>
        <begin position="450"/>
        <end position="470"/>
    </location>
</feature>
<feature type="domain" description="PTS EIIB type-1" evidence="2">
    <location>
        <begin position="5"/>
        <end position="87"/>
    </location>
</feature>
<feature type="domain" description="PTS EIIC type-1" evidence="3">
    <location>
        <begin position="130"/>
        <end position="484"/>
    </location>
</feature>
<feature type="active site" description="Phosphocysteine intermediate; for EIIB activity" evidence="2">
    <location>
        <position position="27"/>
    </location>
</feature>
<protein>
    <recommendedName>
        <fullName evidence="1">PTS system MurNAc-GlcNAc-specific EIIBC component</fullName>
    </recommendedName>
    <domain>
        <recommendedName>
            <fullName>MurNAc-GlcNAc-specific phosphotransferase enzyme IIB component</fullName>
            <ecNumber evidence="1">2.7.1.-</ecNumber>
        </recommendedName>
        <alternativeName>
            <fullName>PTS system MurNAc-GlcNAc-specific EIIB component</fullName>
        </alternativeName>
    </domain>
    <domain>
        <recommendedName>
            <fullName>MurNAc-GlcNAc permease IIC component</fullName>
        </recommendedName>
        <alternativeName>
            <fullName>PTS system MurNAc-GlcNAc-specific EIIC component</fullName>
        </alternativeName>
    </domain>
</protein>
<proteinExistence type="evidence at protein level"/>
<name>PTXBC_STAAN</name>
<comment type="function">
    <text evidence="1">The phosphoenolpyruvate-dependent sugar phosphotransferase system (sugar PTS), a major carbohydrate active transport system, catalyzes the phosphorylation of incoming sugar substrates concomitantly with their translocation across the cell membrane. This system is involved in the uptake and phosphorylation of MurNAc-GlcNAc, the principle peptidoglycan turnover product of S.aureus, yielding cytoplasmic MurNAc 6P-GlcNAc.</text>
</comment>
<comment type="catalytic activity">
    <reaction evidence="1">
        <text>N-acetyl-beta-D-muramate-(1-&gt;4)-N-acetyl-D-glucosamine(out) + N(pros)-phospho-L-histidyl-[protein] = 6-phospho-N-acetyl-beta-D-muramate-(1-&gt;4)-N-acetyl-D-glucosamine(in) + L-histidyl-[protein]</text>
        <dbReference type="Rhea" id="RHEA:66784"/>
        <dbReference type="Rhea" id="RHEA-COMP:9745"/>
        <dbReference type="Rhea" id="RHEA-COMP:9746"/>
        <dbReference type="ChEBI" id="CHEBI:29979"/>
        <dbReference type="ChEBI" id="CHEBI:64837"/>
        <dbReference type="ChEBI" id="CHEBI:167476"/>
        <dbReference type="ChEBI" id="CHEBI:167477"/>
    </reaction>
    <physiologicalReaction direction="left-to-right" evidence="1">
        <dbReference type="Rhea" id="RHEA:66785"/>
    </physiologicalReaction>
</comment>
<comment type="pathway">
    <text evidence="1">Cell wall biogenesis; peptidoglycan recycling.</text>
</comment>
<comment type="subcellular location">
    <subcellularLocation>
        <location evidence="3">Cell membrane</location>
        <topology evidence="3">Multi-pass membrane protein</topology>
    </subcellularLocation>
</comment>
<comment type="domain">
    <text>The EIIB domain is phosphorylated by phospho-EIIA on a cysteinyl or histidyl residue, depending on the transported sugar. Then, it transfers the phosphoryl group to the sugar substrate concomitantly with the sugar uptake processed by the EIIC domain.</text>
</comment>
<comment type="domain">
    <text>The EIIC domain forms the PTS system translocation channel and contains the specific substrate-binding site.</text>
</comment>
<evidence type="ECO:0000250" key="1">
    <source>
        <dbReference type="UniProtKB" id="Q2FK70"/>
    </source>
</evidence>
<evidence type="ECO:0000255" key="2">
    <source>
        <dbReference type="PROSITE-ProRule" id="PRU00421"/>
    </source>
</evidence>
<evidence type="ECO:0000255" key="3">
    <source>
        <dbReference type="PROSITE-ProRule" id="PRU00426"/>
    </source>
</evidence>
<gene>
    <name type="ordered locus">SA0186</name>
</gene>
<keyword id="KW-1003">Cell membrane</keyword>
<keyword id="KW-0418">Kinase</keyword>
<keyword id="KW-0472">Membrane</keyword>
<keyword id="KW-0598">Phosphotransferase system</keyword>
<keyword id="KW-0762">Sugar transport</keyword>
<keyword id="KW-0808">Transferase</keyword>
<keyword id="KW-0812">Transmembrane</keyword>
<keyword id="KW-1133">Transmembrane helix</keyword>
<keyword id="KW-0813">Transport</keyword>
<reference key="1">
    <citation type="journal article" date="2001" name="Lancet">
        <title>Whole genome sequencing of meticillin-resistant Staphylococcus aureus.</title>
        <authorList>
            <person name="Kuroda M."/>
            <person name="Ohta T."/>
            <person name="Uchiyama I."/>
            <person name="Baba T."/>
            <person name="Yuzawa H."/>
            <person name="Kobayashi I."/>
            <person name="Cui L."/>
            <person name="Oguchi A."/>
            <person name="Aoki K."/>
            <person name="Nagai Y."/>
            <person name="Lian J.-Q."/>
            <person name="Ito T."/>
            <person name="Kanamori M."/>
            <person name="Matsumaru H."/>
            <person name="Maruyama A."/>
            <person name="Murakami H."/>
            <person name="Hosoyama A."/>
            <person name="Mizutani-Ui Y."/>
            <person name="Takahashi N.K."/>
            <person name="Sawano T."/>
            <person name="Inoue R."/>
            <person name="Kaito C."/>
            <person name="Sekimizu K."/>
            <person name="Hirakawa H."/>
            <person name="Kuhara S."/>
            <person name="Goto S."/>
            <person name="Yabuzaki J."/>
            <person name="Kanehisa M."/>
            <person name="Yamashita A."/>
            <person name="Oshima K."/>
            <person name="Furuya K."/>
            <person name="Yoshino C."/>
            <person name="Shiba T."/>
            <person name="Hattori M."/>
            <person name="Ogasawara N."/>
            <person name="Hayashi H."/>
            <person name="Hiramatsu K."/>
        </authorList>
    </citation>
    <scope>NUCLEOTIDE SEQUENCE [LARGE SCALE GENOMIC DNA]</scope>
    <source>
        <strain>N315</strain>
    </source>
</reference>
<reference key="2">
    <citation type="submission" date="2007-10" db="UniProtKB">
        <title>Shotgun proteomic analysis of total and membrane protein extracts of S. aureus strain N315.</title>
        <authorList>
            <person name="Vaezzadeh A.R."/>
            <person name="Deshusses J."/>
            <person name="Lescuyer P."/>
            <person name="Hochstrasser D.F."/>
        </authorList>
    </citation>
    <scope>IDENTIFICATION BY MASS SPECTROMETRY [LARGE SCALE ANALYSIS]</scope>
    <source>
        <strain>N315</strain>
    </source>
</reference>
<accession>Q7A804</accession>